<gene>
    <name evidence="1" type="primary">apaH</name>
    <name type="ordered locus">AZOSEA08870</name>
    <name type="ORF">ebA1627</name>
</gene>
<feature type="chain" id="PRO_1000012044" description="Bis(5'-nucleosyl)-tetraphosphatase, symmetrical">
    <location>
        <begin position="1"/>
        <end position="273"/>
    </location>
</feature>
<organism>
    <name type="scientific">Aromatoleum aromaticum (strain DSM 19018 / LMG 30748 / EbN1)</name>
    <name type="common">Azoarcus sp. (strain EbN1)</name>
    <dbReference type="NCBI Taxonomy" id="76114"/>
    <lineage>
        <taxon>Bacteria</taxon>
        <taxon>Pseudomonadati</taxon>
        <taxon>Pseudomonadota</taxon>
        <taxon>Betaproteobacteria</taxon>
        <taxon>Rhodocyclales</taxon>
        <taxon>Rhodocyclaceae</taxon>
        <taxon>Aromatoleum</taxon>
    </lineage>
</organism>
<proteinExistence type="inferred from homology"/>
<keyword id="KW-0378">Hydrolase</keyword>
<keyword id="KW-1185">Reference proteome</keyword>
<sequence>MAIYAIGDIQGCFREFRELVDQCGFDPSSDRLWLVGDLVNRGPASLETLRFVRSLGDAAVSVLGNHDLYLLKIAYAGASGRKRHDTLQQVLEAPDRDELIAWLRTLPLMHLEGGYAMVHAGLLPGWTAEPARALAREVEAVLSGDSCEAFLQHMWGNSPKAWRDDLAGWERLRVIVNAMTRMRFCTPDGRMEFDAKGPPDSAPPNHLPWFAHPNRASSDTTIVCGHWSALGLRMEPNLLALDSGCVWGEKLTAVRLEDRRVFQVHAGKQLGSF</sequence>
<accession>Q5P6P9</accession>
<reference key="1">
    <citation type="journal article" date="2005" name="Arch. Microbiol.">
        <title>The genome sequence of an anaerobic aromatic-degrading denitrifying bacterium, strain EbN1.</title>
        <authorList>
            <person name="Rabus R."/>
            <person name="Kube M."/>
            <person name="Heider J."/>
            <person name="Beck A."/>
            <person name="Heitmann K."/>
            <person name="Widdel F."/>
            <person name="Reinhardt R."/>
        </authorList>
    </citation>
    <scope>NUCLEOTIDE SEQUENCE [LARGE SCALE GENOMIC DNA]</scope>
    <source>
        <strain>DSM 19018 / LMG 30748 / EbN1</strain>
    </source>
</reference>
<protein>
    <recommendedName>
        <fullName evidence="1">Bis(5'-nucleosyl)-tetraphosphatase, symmetrical</fullName>
        <ecNumber evidence="1">3.6.1.41</ecNumber>
    </recommendedName>
    <alternativeName>
        <fullName evidence="1">Ap4A hydrolase</fullName>
    </alternativeName>
    <alternativeName>
        <fullName evidence="1">Diadenosine 5',5'''-P1,P4-tetraphosphate pyrophosphohydrolase</fullName>
    </alternativeName>
    <alternativeName>
        <fullName evidence="1">Diadenosine tetraphosphatase</fullName>
    </alternativeName>
</protein>
<evidence type="ECO:0000255" key="1">
    <source>
        <dbReference type="HAMAP-Rule" id="MF_00199"/>
    </source>
</evidence>
<comment type="function">
    <text evidence="1">Hydrolyzes diadenosine 5',5'''-P1,P4-tetraphosphate to yield ADP.</text>
</comment>
<comment type="catalytic activity">
    <reaction evidence="1">
        <text>P(1),P(4)-bis(5'-adenosyl) tetraphosphate + H2O = 2 ADP + 2 H(+)</text>
        <dbReference type="Rhea" id="RHEA:24252"/>
        <dbReference type="ChEBI" id="CHEBI:15377"/>
        <dbReference type="ChEBI" id="CHEBI:15378"/>
        <dbReference type="ChEBI" id="CHEBI:58141"/>
        <dbReference type="ChEBI" id="CHEBI:456216"/>
        <dbReference type="EC" id="3.6.1.41"/>
    </reaction>
</comment>
<comment type="similarity">
    <text evidence="1">Belongs to the Ap4A hydrolase family.</text>
</comment>
<name>APAH_AROAE</name>
<dbReference type="EC" id="3.6.1.41" evidence="1"/>
<dbReference type="EMBL" id="CR555306">
    <property type="protein sequence ID" value="CAI07012.1"/>
    <property type="molecule type" value="Genomic_DNA"/>
</dbReference>
<dbReference type="RefSeq" id="WP_011236737.1">
    <property type="nucleotide sequence ID" value="NC_006513.1"/>
</dbReference>
<dbReference type="SMR" id="Q5P6P9"/>
<dbReference type="STRING" id="76114.ebA1627"/>
<dbReference type="KEGG" id="eba:ebA1627"/>
<dbReference type="eggNOG" id="COG0639">
    <property type="taxonomic scope" value="Bacteria"/>
</dbReference>
<dbReference type="HOGENOM" id="CLU_056184_2_0_4"/>
<dbReference type="OrthoDB" id="9807890at2"/>
<dbReference type="Proteomes" id="UP000006552">
    <property type="component" value="Chromosome"/>
</dbReference>
<dbReference type="GO" id="GO:0008803">
    <property type="term" value="F:bis(5'-nucleosyl)-tetraphosphatase (symmetrical) activity"/>
    <property type="evidence" value="ECO:0007669"/>
    <property type="project" value="UniProtKB-UniRule"/>
</dbReference>
<dbReference type="CDD" id="cd07422">
    <property type="entry name" value="MPP_ApaH"/>
    <property type="match status" value="1"/>
</dbReference>
<dbReference type="Gene3D" id="3.60.21.10">
    <property type="match status" value="1"/>
</dbReference>
<dbReference type="HAMAP" id="MF_00199">
    <property type="entry name" value="ApaH"/>
    <property type="match status" value="1"/>
</dbReference>
<dbReference type="InterPro" id="IPR004617">
    <property type="entry name" value="ApaH"/>
</dbReference>
<dbReference type="InterPro" id="IPR004843">
    <property type="entry name" value="Calcineurin-like_PHP_ApaH"/>
</dbReference>
<dbReference type="InterPro" id="IPR029052">
    <property type="entry name" value="Metallo-depent_PP-like"/>
</dbReference>
<dbReference type="NCBIfam" id="TIGR00668">
    <property type="entry name" value="apaH"/>
    <property type="match status" value="1"/>
</dbReference>
<dbReference type="NCBIfam" id="NF001204">
    <property type="entry name" value="PRK00166.1"/>
    <property type="match status" value="1"/>
</dbReference>
<dbReference type="PANTHER" id="PTHR40942">
    <property type="match status" value="1"/>
</dbReference>
<dbReference type="PANTHER" id="PTHR40942:SF4">
    <property type="entry name" value="CYTOCHROME C5"/>
    <property type="match status" value="1"/>
</dbReference>
<dbReference type="Pfam" id="PF00149">
    <property type="entry name" value="Metallophos"/>
    <property type="match status" value="1"/>
</dbReference>
<dbReference type="PIRSF" id="PIRSF000903">
    <property type="entry name" value="B5n-ttraPtase_sm"/>
    <property type="match status" value="1"/>
</dbReference>
<dbReference type="SUPFAM" id="SSF56300">
    <property type="entry name" value="Metallo-dependent phosphatases"/>
    <property type="match status" value="1"/>
</dbReference>